<organism>
    <name type="scientific">Natronomonas pharaonis (strain ATCC 35678 / DSM 2160 / CIP 103997 / JCM 8858 / NBRC 14720 / NCIMB 2260 / Gabara)</name>
    <name type="common">Halobacterium pharaonis</name>
    <dbReference type="NCBI Taxonomy" id="348780"/>
    <lineage>
        <taxon>Archaea</taxon>
        <taxon>Methanobacteriati</taxon>
        <taxon>Methanobacteriota</taxon>
        <taxon>Stenosarchaea group</taxon>
        <taxon>Halobacteria</taxon>
        <taxon>Halobacteriales</taxon>
        <taxon>Haloarculaceae</taxon>
        <taxon>Natronomonas</taxon>
    </lineage>
</organism>
<sequence length="747" mass="81108">MDVSEVSGVPPWFADHLREEGIESLYPPQAAAVDAGVADGESLVASVPTASGKTLVAQLAMLSAIDRGGTALYIVPLRALASEKREEFAAFEEYGLSVGVTTGSYEDTGEWLADKDIIVATSEKVDSLVRNGAPWIDDLDCVVADEVHLVDDEHRGPTLEVTLAKLRRVNPNLQVVALSATVGNAGEMAEWLDAELVDSSWRPIELRKGVHYGQALHFGDGTQQELPVQRTEKPTEAVVRETLDEGGSTLVFVNSRRNAEGAAKRLAKTTVDGLDADERAALSSLAEEIRAVSDTETSDDLADCVEQGAAFHHAGCSSEHRSLVEDAFRDRLIKTICATPTLAAGVNTPARRVVVRDWRRYSGDAGGMQPLSVLEVHQMMGRAGRPGRDPYGEAVLLADSHDELDELLDRYVWADPEPVESKLAREPSMRTHLLATVASGFADSRSALLSFLDRTLYATQYRHGDGEDNLERVVDTTLSYLETNGFIDRDGDAIEATDLGHTVSRLYLDPMSAAEIIDGLADAASPTAMGLYQLVARTPDMYELYLRSGDREEYTMLAYEREAELLGELPSEFEEGRFEDWLSALKTARMLEDWASELDEDDIAERYGVGPGDIRGKVDTAEWLLGAAESLASEQDLADVSAIREARKRVEHGVGEELIDLAGVRGVGRKRARRLYDAGIETRADLRNADKSVVLAALRGREQTAENVLEAAGHQQPEMDGVTPDADVKESAAAAGTDDGQANLGDF</sequence>
<comment type="function">
    <text evidence="1">DNA-dependent ATPase and 3'-5' DNA helicase that may be involved in repair of stalled replication forks.</text>
</comment>
<comment type="catalytic activity">
    <reaction evidence="1">
        <text>Couples ATP hydrolysis with the unwinding of duplex DNA by translocating in the 3'-5' direction.</text>
        <dbReference type="EC" id="5.6.2.4"/>
    </reaction>
</comment>
<comment type="catalytic activity">
    <reaction evidence="1">
        <text>ATP + H2O = ADP + phosphate + H(+)</text>
        <dbReference type="Rhea" id="RHEA:13065"/>
        <dbReference type="ChEBI" id="CHEBI:15377"/>
        <dbReference type="ChEBI" id="CHEBI:15378"/>
        <dbReference type="ChEBI" id="CHEBI:30616"/>
        <dbReference type="ChEBI" id="CHEBI:43474"/>
        <dbReference type="ChEBI" id="CHEBI:456216"/>
        <dbReference type="EC" id="5.6.2.4"/>
    </reaction>
</comment>
<comment type="subunit">
    <text evidence="1">Monomer.</text>
</comment>
<comment type="similarity">
    <text evidence="1">Belongs to the helicase family. Hel308 subfamily.</text>
</comment>
<gene>
    <name evidence="1" type="primary">hel308</name>
    <name type="ordered locus">NP_0492A</name>
</gene>
<name>HELS_NATPD</name>
<dbReference type="EC" id="5.6.2.4" evidence="1"/>
<dbReference type="EMBL" id="CR936257">
    <property type="protein sequence ID" value="CAI48337.1"/>
    <property type="molecule type" value="Genomic_DNA"/>
</dbReference>
<dbReference type="RefSeq" id="WP_011321973.1">
    <property type="nucleotide sequence ID" value="NC_007426.1"/>
</dbReference>
<dbReference type="SMR" id="Q3IU46"/>
<dbReference type="STRING" id="348780.NP_0492A"/>
<dbReference type="EnsemblBacteria" id="CAI48337">
    <property type="protein sequence ID" value="CAI48337"/>
    <property type="gene ID" value="NP_0492A"/>
</dbReference>
<dbReference type="GeneID" id="3702913"/>
<dbReference type="KEGG" id="nph:NP_0492A"/>
<dbReference type="eggNOG" id="arCOG00553">
    <property type="taxonomic scope" value="Archaea"/>
</dbReference>
<dbReference type="HOGENOM" id="CLU_006553_3_0_2"/>
<dbReference type="OrthoDB" id="371946at2157"/>
<dbReference type="Proteomes" id="UP000002698">
    <property type="component" value="Chromosome"/>
</dbReference>
<dbReference type="GO" id="GO:0043138">
    <property type="term" value="F:3'-5' DNA helicase activity"/>
    <property type="evidence" value="ECO:0007669"/>
    <property type="project" value="UniProtKB-UniRule"/>
</dbReference>
<dbReference type="GO" id="GO:0005524">
    <property type="term" value="F:ATP binding"/>
    <property type="evidence" value="ECO:0007669"/>
    <property type="project" value="UniProtKB-UniRule"/>
</dbReference>
<dbReference type="GO" id="GO:0016887">
    <property type="term" value="F:ATP hydrolysis activity"/>
    <property type="evidence" value="ECO:0007669"/>
    <property type="project" value="RHEA"/>
</dbReference>
<dbReference type="GO" id="GO:0003677">
    <property type="term" value="F:DNA binding"/>
    <property type="evidence" value="ECO:0007669"/>
    <property type="project" value="UniProtKB-UniRule"/>
</dbReference>
<dbReference type="GO" id="GO:0006281">
    <property type="term" value="P:DNA repair"/>
    <property type="evidence" value="ECO:0007669"/>
    <property type="project" value="UniProtKB-UniRule"/>
</dbReference>
<dbReference type="CDD" id="cd18028">
    <property type="entry name" value="DEXHc_archSki2"/>
    <property type="match status" value="1"/>
</dbReference>
<dbReference type="CDD" id="cd18795">
    <property type="entry name" value="SF2_C_Ski2"/>
    <property type="match status" value="1"/>
</dbReference>
<dbReference type="Gene3D" id="1.10.3380.30">
    <property type="match status" value="1"/>
</dbReference>
<dbReference type="Gene3D" id="1.10.150.20">
    <property type="entry name" value="5' to 3' exonuclease, C-terminal subdomain"/>
    <property type="match status" value="1"/>
</dbReference>
<dbReference type="Gene3D" id="3.40.50.300">
    <property type="entry name" value="P-loop containing nucleotide triphosphate hydrolases"/>
    <property type="match status" value="2"/>
</dbReference>
<dbReference type="HAMAP" id="MF_00442">
    <property type="entry name" value="Helicase_Hel308"/>
    <property type="match status" value="1"/>
</dbReference>
<dbReference type="InterPro" id="IPR011545">
    <property type="entry name" value="DEAD/DEAH_box_helicase_dom"/>
</dbReference>
<dbReference type="InterPro" id="IPR048772">
    <property type="entry name" value="Hel308-like_dom4"/>
</dbReference>
<dbReference type="InterPro" id="IPR050474">
    <property type="entry name" value="Hel308_SKI2-like"/>
</dbReference>
<dbReference type="InterPro" id="IPR014001">
    <property type="entry name" value="Helicase_ATP-bd"/>
</dbReference>
<dbReference type="InterPro" id="IPR001650">
    <property type="entry name" value="Helicase_C-like"/>
</dbReference>
<dbReference type="InterPro" id="IPR022965">
    <property type="entry name" value="Helicase_Hel308"/>
</dbReference>
<dbReference type="InterPro" id="IPR027417">
    <property type="entry name" value="P-loop_NTPase"/>
</dbReference>
<dbReference type="InterPro" id="IPR036390">
    <property type="entry name" value="WH_DNA-bd_sf"/>
</dbReference>
<dbReference type="NCBIfam" id="NF002654">
    <property type="entry name" value="PRK02362.1"/>
    <property type="match status" value="1"/>
</dbReference>
<dbReference type="PANTHER" id="PTHR47961:SF10">
    <property type="entry name" value="ATP-DEPENDENT DNA HELICASE HEL308"/>
    <property type="match status" value="1"/>
</dbReference>
<dbReference type="PANTHER" id="PTHR47961">
    <property type="entry name" value="DNA POLYMERASE THETA, PUTATIVE (AFU_ORTHOLOGUE AFUA_1G05260)-RELATED"/>
    <property type="match status" value="1"/>
</dbReference>
<dbReference type="Pfam" id="PF00270">
    <property type="entry name" value="DEAD"/>
    <property type="match status" value="1"/>
</dbReference>
<dbReference type="Pfam" id="PF00271">
    <property type="entry name" value="Helicase_C"/>
    <property type="match status" value="1"/>
</dbReference>
<dbReference type="Pfam" id="PF21280">
    <property type="entry name" value="Helicase_dom4_arc"/>
    <property type="match status" value="1"/>
</dbReference>
<dbReference type="Pfam" id="PF14520">
    <property type="entry name" value="HHH_5"/>
    <property type="match status" value="1"/>
</dbReference>
<dbReference type="SMART" id="SM00487">
    <property type="entry name" value="DEXDc"/>
    <property type="match status" value="1"/>
</dbReference>
<dbReference type="SMART" id="SM00490">
    <property type="entry name" value="HELICc"/>
    <property type="match status" value="1"/>
</dbReference>
<dbReference type="SUPFAM" id="SSF52540">
    <property type="entry name" value="P-loop containing nucleoside triphosphate hydrolases"/>
    <property type="match status" value="1"/>
</dbReference>
<dbReference type="SUPFAM" id="SSF158702">
    <property type="entry name" value="Sec63 N-terminal domain-like"/>
    <property type="match status" value="1"/>
</dbReference>
<dbReference type="SUPFAM" id="SSF46785">
    <property type="entry name" value="Winged helix' DNA-binding domain"/>
    <property type="match status" value="1"/>
</dbReference>
<dbReference type="PROSITE" id="PS51192">
    <property type="entry name" value="HELICASE_ATP_BIND_1"/>
    <property type="match status" value="1"/>
</dbReference>
<dbReference type="PROSITE" id="PS51194">
    <property type="entry name" value="HELICASE_CTER"/>
    <property type="match status" value="1"/>
</dbReference>
<reference key="1">
    <citation type="journal article" date="2005" name="Genome Res.">
        <title>Living with two extremes: conclusions from the genome sequence of Natronomonas pharaonis.</title>
        <authorList>
            <person name="Falb M."/>
            <person name="Pfeiffer F."/>
            <person name="Palm P."/>
            <person name="Rodewald K."/>
            <person name="Hickmann V."/>
            <person name="Tittor J."/>
            <person name="Oesterhelt D."/>
        </authorList>
    </citation>
    <scope>NUCLEOTIDE SEQUENCE [LARGE SCALE GENOMIC DNA]</scope>
    <source>
        <strain>ATCC 35678 / DSM 2160 / CIP 103997 / JCM 8858 / NBRC 14720 / NCIMB 2260 / Gabara</strain>
    </source>
</reference>
<evidence type="ECO:0000255" key="1">
    <source>
        <dbReference type="HAMAP-Rule" id="MF_00442"/>
    </source>
</evidence>
<evidence type="ECO:0000256" key="2">
    <source>
        <dbReference type="SAM" id="MobiDB-lite"/>
    </source>
</evidence>
<feature type="chain" id="PRO_1000080862" description="ATP-dependent DNA helicase Hel308">
    <location>
        <begin position="1"/>
        <end position="747"/>
    </location>
</feature>
<feature type="domain" description="Helicase ATP-binding" evidence="1">
    <location>
        <begin position="34"/>
        <end position="200"/>
    </location>
</feature>
<feature type="domain" description="Helicase C-terminal" evidence="1">
    <location>
        <begin position="234"/>
        <end position="434"/>
    </location>
</feature>
<feature type="region of interest" description="Disordered" evidence="2">
    <location>
        <begin position="711"/>
        <end position="747"/>
    </location>
</feature>
<feature type="short sequence motif" description="DEAH box" evidence="1">
    <location>
        <begin position="145"/>
        <end position="148"/>
    </location>
</feature>
<feature type="binding site" evidence="1">
    <location>
        <position position="29"/>
    </location>
    <ligand>
        <name>ATP</name>
        <dbReference type="ChEBI" id="CHEBI:30616"/>
    </ligand>
</feature>
<feature type="binding site" evidence="1">
    <location>
        <begin position="47"/>
        <end position="54"/>
    </location>
    <ligand>
        <name>ATP</name>
        <dbReference type="ChEBI" id="CHEBI:30616"/>
    </ligand>
</feature>
<proteinExistence type="inferred from homology"/>
<keyword id="KW-0067">ATP-binding</keyword>
<keyword id="KW-0227">DNA damage</keyword>
<keyword id="KW-0234">DNA repair</keyword>
<keyword id="KW-0238">DNA-binding</keyword>
<keyword id="KW-0347">Helicase</keyword>
<keyword id="KW-0378">Hydrolase</keyword>
<keyword id="KW-0413">Isomerase</keyword>
<keyword id="KW-0547">Nucleotide-binding</keyword>
<keyword id="KW-1185">Reference proteome</keyword>
<accession>Q3IU46</accession>
<protein>
    <recommendedName>
        <fullName evidence="1">ATP-dependent DNA helicase Hel308</fullName>
        <ecNumber evidence="1">5.6.2.4</ecNumber>
    </recommendedName>
    <alternativeName>
        <fullName evidence="1">DNA 3'-5' helicase Hel308</fullName>
    </alternativeName>
</protein>